<dbReference type="EC" id="5.3.1.24" evidence="1"/>
<dbReference type="EMBL" id="AE005672">
    <property type="protein sequence ID" value="AAK75886.1"/>
    <property type="molecule type" value="Genomic_DNA"/>
</dbReference>
<dbReference type="PIR" id="E95211">
    <property type="entry name" value="E95211"/>
</dbReference>
<dbReference type="RefSeq" id="WP_000169894.1">
    <property type="nucleotide sequence ID" value="NZ_CP155539.1"/>
</dbReference>
<dbReference type="SMR" id="Q97P31"/>
<dbReference type="PaxDb" id="170187-SP_1813"/>
<dbReference type="EnsemblBacteria" id="AAK75886">
    <property type="protein sequence ID" value="AAK75886"/>
    <property type="gene ID" value="SP_1813"/>
</dbReference>
<dbReference type="KEGG" id="spn:SP_1813"/>
<dbReference type="eggNOG" id="COG0135">
    <property type="taxonomic scope" value="Bacteria"/>
</dbReference>
<dbReference type="PhylomeDB" id="Q97P31"/>
<dbReference type="UniPathway" id="UPA00035">
    <property type="reaction ID" value="UER00042"/>
</dbReference>
<dbReference type="Proteomes" id="UP000000585">
    <property type="component" value="Chromosome"/>
</dbReference>
<dbReference type="GO" id="GO:0004640">
    <property type="term" value="F:phosphoribosylanthranilate isomerase activity"/>
    <property type="evidence" value="ECO:0007669"/>
    <property type="project" value="UniProtKB-UniRule"/>
</dbReference>
<dbReference type="GO" id="GO:0000162">
    <property type="term" value="P:L-tryptophan biosynthetic process"/>
    <property type="evidence" value="ECO:0007669"/>
    <property type="project" value="UniProtKB-UniRule"/>
</dbReference>
<dbReference type="CDD" id="cd00405">
    <property type="entry name" value="PRAI"/>
    <property type="match status" value="1"/>
</dbReference>
<dbReference type="FunFam" id="3.20.20.70:FF:000075">
    <property type="entry name" value="Tryptophan biosynthesis protein TRP1"/>
    <property type="match status" value="1"/>
</dbReference>
<dbReference type="Gene3D" id="3.20.20.70">
    <property type="entry name" value="Aldolase class I"/>
    <property type="match status" value="1"/>
</dbReference>
<dbReference type="HAMAP" id="MF_00135">
    <property type="entry name" value="PRAI"/>
    <property type="match status" value="1"/>
</dbReference>
<dbReference type="InterPro" id="IPR013785">
    <property type="entry name" value="Aldolase_TIM"/>
</dbReference>
<dbReference type="InterPro" id="IPR001240">
    <property type="entry name" value="PRAI_dom"/>
</dbReference>
<dbReference type="InterPro" id="IPR011060">
    <property type="entry name" value="RibuloseP-bd_barrel"/>
</dbReference>
<dbReference type="InterPro" id="IPR044643">
    <property type="entry name" value="TrpF_fam"/>
</dbReference>
<dbReference type="NCBIfam" id="NF002300">
    <property type="entry name" value="PRK01222.1-7"/>
    <property type="match status" value="1"/>
</dbReference>
<dbReference type="PANTHER" id="PTHR42894">
    <property type="entry name" value="N-(5'-PHOSPHORIBOSYL)ANTHRANILATE ISOMERASE"/>
    <property type="match status" value="1"/>
</dbReference>
<dbReference type="PANTHER" id="PTHR42894:SF1">
    <property type="entry name" value="N-(5'-PHOSPHORIBOSYL)ANTHRANILATE ISOMERASE"/>
    <property type="match status" value="1"/>
</dbReference>
<dbReference type="Pfam" id="PF00697">
    <property type="entry name" value="PRAI"/>
    <property type="match status" value="1"/>
</dbReference>
<dbReference type="SUPFAM" id="SSF51366">
    <property type="entry name" value="Ribulose-phoshate binding barrel"/>
    <property type="match status" value="1"/>
</dbReference>
<reference key="1">
    <citation type="journal article" date="2001" name="Science">
        <title>Complete genome sequence of a virulent isolate of Streptococcus pneumoniae.</title>
        <authorList>
            <person name="Tettelin H."/>
            <person name="Nelson K.E."/>
            <person name="Paulsen I.T."/>
            <person name="Eisen J.A."/>
            <person name="Read T.D."/>
            <person name="Peterson S.N."/>
            <person name="Heidelberg J.F."/>
            <person name="DeBoy R.T."/>
            <person name="Haft D.H."/>
            <person name="Dodson R.J."/>
            <person name="Durkin A.S."/>
            <person name="Gwinn M.L."/>
            <person name="Kolonay J.F."/>
            <person name="Nelson W.C."/>
            <person name="Peterson J.D."/>
            <person name="Umayam L.A."/>
            <person name="White O."/>
            <person name="Salzberg S.L."/>
            <person name="Lewis M.R."/>
            <person name="Radune D."/>
            <person name="Holtzapple E.K."/>
            <person name="Khouri H.M."/>
            <person name="Wolf A.M."/>
            <person name="Utterback T.R."/>
            <person name="Hansen C.L."/>
            <person name="McDonald L.A."/>
            <person name="Feldblyum T.V."/>
            <person name="Angiuoli S.V."/>
            <person name="Dickinson T."/>
            <person name="Hickey E.K."/>
            <person name="Holt I.E."/>
            <person name="Loftus B.J."/>
            <person name="Yang F."/>
            <person name="Smith H.O."/>
            <person name="Venter J.C."/>
            <person name="Dougherty B.A."/>
            <person name="Morrison D.A."/>
            <person name="Hollingshead S.K."/>
            <person name="Fraser C.M."/>
        </authorList>
    </citation>
    <scope>NUCLEOTIDE SEQUENCE [LARGE SCALE GENOMIC DNA]</scope>
    <source>
        <strain>ATCC BAA-334 / TIGR4</strain>
    </source>
</reference>
<gene>
    <name evidence="1" type="primary">trpF</name>
    <name type="ordered locus">SP_1813</name>
</gene>
<evidence type="ECO:0000255" key="1">
    <source>
        <dbReference type="HAMAP-Rule" id="MF_00135"/>
    </source>
</evidence>
<comment type="catalytic activity">
    <reaction evidence="1">
        <text>N-(5-phospho-beta-D-ribosyl)anthranilate = 1-(2-carboxyphenylamino)-1-deoxy-D-ribulose 5-phosphate</text>
        <dbReference type="Rhea" id="RHEA:21540"/>
        <dbReference type="ChEBI" id="CHEBI:18277"/>
        <dbReference type="ChEBI" id="CHEBI:58613"/>
        <dbReference type="EC" id="5.3.1.24"/>
    </reaction>
</comment>
<comment type="pathway">
    <text evidence="1">Amino-acid biosynthesis; L-tryptophan biosynthesis; L-tryptophan from chorismate: step 3/5.</text>
</comment>
<comment type="similarity">
    <text evidence="1">Belongs to the TrpF family.</text>
</comment>
<feature type="chain" id="PRO_0000154386" description="N-(5'-phosphoribosyl)anthranilate isomerase">
    <location>
        <begin position="1"/>
        <end position="199"/>
    </location>
</feature>
<protein>
    <recommendedName>
        <fullName evidence="1">N-(5'-phosphoribosyl)anthranilate isomerase</fullName>
        <shortName evidence="1">PRAI</shortName>
        <ecNumber evidence="1">5.3.1.24</ecNumber>
    </recommendedName>
</protein>
<accession>Q97P31</accession>
<proteinExistence type="inferred from homology"/>
<name>TRPF_STRPN</name>
<sequence>MTKVKICGLSTKEAVETAVSAGADYIGFVFAPSKRQVTLEEAAELAKLIPADVKKVGVFVSPSRVELLEAIDKVGLDLVQVHGQVADDLFENLPCASIQAVQVDGNGHVPNSQADYLLFDAPVAGSGQPFDWGQLDTTGLAQPFFIAGGLNEDNVVKAIQHFTPYAVDVSSGVETDGQKDHEKIRRFIERVKHGISGTK</sequence>
<organism>
    <name type="scientific">Streptococcus pneumoniae serotype 4 (strain ATCC BAA-334 / TIGR4)</name>
    <dbReference type="NCBI Taxonomy" id="170187"/>
    <lineage>
        <taxon>Bacteria</taxon>
        <taxon>Bacillati</taxon>
        <taxon>Bacillota</taxon>
        <taxon>Bacilli</taxon>
        <taxon>Lactobacillales</taxon>
        <taxon>Streptococcaceae</taxon>
        <taxon>Streptococcus</taxon>
    </lineage>
</organism>
<keyword id="KW-0028">Amino-acid biosynthesis</keyword>
<keyword id="KW-0057">Aromatic amino acid biosynthesis</keyword>
<keyword id="KW-0413">Isomerase</keyword>
<keyword id="KW-1185">Reference proteome</keyword>
<keyword id="KW-0822">Tryptophan biosynthesis</keyword>